<feature type="chain" id="PRO_0000082782" description="Peptide deformylase">
    <location>
        <begin position="1"/>
        <end position="187"/>
    </location>
</feature>
<feature type="active site" evidence="1">
    <location>
        <position position="158"/>
    </location>
</feature>
<feature type="binding site" evidence="1">
    <location>
        <position position="114"/>
    </location>
    <ligand>
        <name>Fe cation</name>
        <dbReference type="ChEBI" id="CHEBI:24875"/>
    </ligand>
</feature>
<feature type="binding site" evidence="1">
    <location>
        <position position="157"/>
    </location>
    <ligand>
        <name>Fe cation</name>
        <dbReference type="ChEBI" id="CHEBI:24875"/>
    </ligand>
</feature>
<feature type="binding site" evidence="1">
    <location>
        <position position="161"/>
    </location>
    <ligand>
        <name>Fe cation</name>
        <dbReference type="ChEBI" id="CHEBI:24875"/>
    </ligand>
</feature>
<feature type="helix" evidence="2">
    <location>
        <begin position="4"/>
        <end position="6"/>
    </location>
</feature>
<feature type="helix" evidence="2">
    <location>
        <begin position="13"/>
        <end position="16"/>
    </location>
</feature>
<feature type="helix" evidence="2">
    <location>
        <begin position="28"/>
        <end position="45"/>
    </location>
</feature>
<feature type="helix" evidence="2">
    <location>
        <begin position="47"/>
        <end position="53"/>
    </location>
</feature>
<feature type="strand" evidence="2">
    <location>
        <begin position="59"/>
        <end position="62"/>
    </location>
</feature>
<feature type="helix" evidence="2">
    <location>
        <begin position="63"/>
        <end position="66"/>
    </location>
</feature>
<feature type="strand" evidence="2">
    <location>
        <begin position="70"/>
        <end position="77"/>
    </location>
</feature>
<feature type="strand" evidence="2">
    <location>
        <begin position="89"/>
        <end position="101"/>
    </location>
</feature>
<feature type="strand" evidence="2">
    <location>
        <begin position="105"/>
        <end position="108"/>
    </location>
</feature>
<feature type="strand" evidence="2">
    <location>
        <begin position="127"/>
        <end position="136"/>
    </location>
</feature>
<feature type="strand" evidence="2">
    <location>
        <begin position="142"/>
        <end position="148"/>
    </location>
</feature>
<feature type="helix" evidence="2">
    <location>
        <begin position="149"/>
        <end position="162"/>
    </location>
</feature>
<feature type="helix" evidence="2">
    <location>
        <begin position="167"/>
        <end position="170"/>
    </location>
</feature>
<feature type="strand" evidence="2">
    <location>
        <begin position="173"/>
        <end position="175"/>
    </location>
</feature>
<feature type="strand" evidence="2">
    <location>
        <begin position="184"/>
        <end position="186"/>
    </location>
</feature>
<accession>Q82ZJ0</accession>
<evidence type="ECO:0000255" key="1">
    <source>
        <dbReference type="HAMAP-Rule" id="MF_00163"/>
    </source>
</evidence>
<evidence type="ECO:0007829" key="2">
    <source>
        <dbReference type="PDB" id="2OS0"/>
    </source>
</evidence>
<comment type="function">
    <text evidence="1">Removes the formyl group from the N-terminal Met of newly synthesized proteins. Requires at least a dipeptide for an efficient rate of reaction. N-terminal L-methionine is a prerequisite for activity but the enzyme has broad specificity at other positions.</text>
</comment>
<comment type="catalytic activity">
    <reaction evidence="1">
        <text>N-terminal N-formyl-L-methionyl-[peptide] + H2O = N-terminal L-methionyl-[peptide] + formate</text>
        <dbReference type="Rhea" id="RHEA:24420"/>
        <dbReference type="Rhea" id="RHEA-COMP:10639"/>
        <dbReference type="Rhea" id="RHEA-COMP:10640"/>
        <dbReference type="ChEBI" id="CHEBI:15377"/>
        <dbReference type="ChEBI" id="CHEBI:15740"/>
        <dbReference type="ChEBI" id="CHEBI:49298"/>
        <dbReference type="ChEBI" id="CHEBI:64731"/>
        <dbReference type="EC" id="3.5.1.88"/>
    </reaction>
</comment>
<comment type="cofactor">
    <cofactor evidence="1">
        <name>Fe(2+)</name>
        <dbReference type="ChEBI" id="CHEBI:29033"/>
    </cofactor>
    <text evidence="1">Binds 1 Fe(2+) ion.</text>
</comment>
<comment type="similarity">
    <text evidence="1">Belongs to the polypeptide deformylase family.</text>
</comment>
<gene>
    <name evidence="1" type="primary">def</name>
    <name type="ordered locus">EF_3066</name>
</gene>
<name>DEF_ENTFA</name>
<dbReference type="EC" id="3.5.1.88" evidence="1"/>
<dbReference type="EMBL" id="AE016830">
    <property type="protein sequence ID" value="AAO82748.1"/>
    <property type="molecule type" value="Genomic_DNA"/>
</dbReference>
<dbReference type="RefSeq" id="NP_816678.1">
    <property type="nucleotide sequence ID" value="NC_004668.1"/>
</dbReference>
<dbReference type="RefSeq" id="WP_002354981.1">
    <property type="nucleotide sequence ID" value="NZ_KE136524.1"/>
</dbReference>
<dbReference type="PDB" id="2OS0">
    <property type="method" value="X-ray"/>
    <property type="resolution" value="1.30 A"/>
    <property type="chains" value="A=1-187"/>
</dbReference>
<dbReference type="PDB" id="2OS1">
    <property type="method" value="X-ray"/>
    <property type="resolution" value="1.50 A"/>
    <property type="chains" value="A=1-187"/>
</dbReference>
<dbReference type="PDBsum" id="2OS0"/>
<dbReference type="PDBsum" id="2OS1"/>
<dbReference type="SMR" id="Q82ZJ0"/>
<dbReference type="STRING" id="226185.EF_3066"/>
<dbReference type="DrugBank" id="DB04310">
    <property type="generic name" value="2-[(Formyl-Hydroxy-Amino)-Methyl]-Heptanoic Acid [1-(2-Hydroxymethyl-Pyrrolidine-1-Carbonyl)-2-Methyl-Propyl]-Amide"/>
</dbReference>
<dbReference type="EnsemblBacteria" id="AAO82748">
    <property type="protein sequence ID" value="AAO82748"/>
    <property type="gene ID" value="EF_3066"/>
</dbReference>
<dbReference type="GeneID" id="60894955"/>
<dbReference type="KEGG" id="efa:EF3066"/>
<dbReference type="PATRIC" id="fig|226185.45.peg.505"/>
<dbReference type="eggNOG" id="COG0242">
    <property type="taxonomic scope" value="Bacteria"/>
</dbReference>
<dbReference type="HOGENOM" id="CLU_061901_4_0_9"/>
<dbReference type="EvolutionaryTrace" id="Q82ZJ0"/>
<dbReference type="Proteomes" id="UP000001415">
    <property type="component" value="Chromosome"/>
</dbReference>
<dbReference type="GO" id="GO:0046872">
    <property type="term" value="F:metal ion binding"/>
    <property type="evidence" value="ECO:0007669"/>
    <property type="project" value="UniProtKB-KW"/>
</dbReference>
<dbReference type="GO" id="GO:0042586">
    <property type="term" value="F:peptide deformylase activity"/>
    <property type="evidence" value="ECO:0007669"/>
    <property type="project" value="UniProtKB-UniRule"/>
</dbReference>
<dbReference type="GO" id="GO:0043686">
    <property type="term" value="P:co-translational protein modification"/>
    <property type="evidence" value="ECO:0007669"/>
    <property type="project" value="TreeGrafter"/>
</dbReference>
<dbReference type="GO" id="GO:0006412">
    <property type="term" value="P:translation"/>
    <property type="evidence" value="ECO:0007669"/>
    <property type="project" value="UniProtKB-UniRule"/>
</dbReference>
<dbReference type="CDD" id="cd00487">
    <property type="entry name" value="Pep_deformylase"/>
    <property type="match status" value="1"/>
</dbReference>
<dbReference type="FunFam" id="3.90.45.10:FF:000002">
    <property type="entry name" value="Peptide deformylase"/>
    <property type="match status" value="1"/>
</dbReference>
<dbReference type="Gene3D" id="3.90.45.10">
    <property type="entry name" value="Peptide deformylase"/>
    <property type="match status" value="1"/>
</dbReference>
<dbReference type="HAMAP" id="MF_00163">
    <property type="entry name" value="Pep_deformylase"/>
    <property type="match status" value="1"/>
</dbReference>
<dbReference type="InterPro" id="IPR023635">
    <property type="entry name" value="Peptide_deformylase"/>
</dbReference>
<dbReference type="InterPro" id="IPR036821">
    <property type="entry name" value="Peptide_deformylase_sf"/>
</dbReference>
<dbReference type="NCBIfam" id="TIGR00079">
    <property type="entry name" value="pept_deformyl"/>
    <property type="match status" value="1"/>
</dbReference>
<dbReference type="PANTHER" id="PTHR10458">
    <property type="entry name" value="PEPTIDE DEFORMYLASE"/>
    <property type="match status" value="1"/>
</dbReference>
<dbReference type="PANTHER" id="PTHR10458:SF8">
    <property type="entry name" value="PEPTIDE DEFORMYLASE 2"/>
    <property type="match status" value="1"/>
</dbReference>
<dbReference type="Pfam" id="PF01327">
    <property type="entry name" value="Pep_deformylase"/>
    <property type="match status" value="1"/>
</dbReference>
<dbReference type="PIRSF" id="PIRSF004749">
    <property type="entry name" value="Pep_def"/>
    <property type="match status" value="1"/>
</dbReference>
<dbReference type="PRINTS" id="PR01576">
    <property type="entry name" value="PDEFORMYLASE"/>
</dbReference>
<dbReference type="SUPFAM" id="SSF56420">
    <property type="entry name" value="Peptide deformylase"/>
    <property type="match status" value="1"/>
</dbReference>
<proteinExistence type="evidence at protein level"/>
<protein>
    <recommendedName>
        <fullName evidence="1">Peptide deformylase</fullName>
        <shortName evidence="1">PDF</shortName>
        <ecNumber evidence="1">3.5.1.88</ecNumber>
    </recommendedName>
    <alternativeName>
        <fullName evidence="1">Polypeptide deformylase</fullName>
    </alternativeName>
</protein>
<keyword id="KW-0002">3D-structure</keyword>
<keyword id="KW-0378">Hydrolase</keyword>
<keyword id="KW-0408">Iron</keyword>
<keyword id="KW-0479">Metal-binding</keyword>
<keyword id="KW-0648">Protein biosynthesis</keyword>
<keyword id="KW-1185">Reference proteome</keyword>
<sequence>MITMKDIIREGNPTLRAVAEEVPVPITEEDRQLGEDMLTFLKNSQDPVKAEELQLRGGVGLAAPQLDISKRIIAVHVPSNDPENETPSLSTVMYNPKILSHSVQDVCLGEGEGCLSVDRDVPGYVVRHNKITVSYFDMAGEKHKVRLKNYEAIVVQHEIDHINGIMFYDHINKENPFALKEGVLVIE</sequence>
<reference key="1">
    <citation type="journal article" date="2003" name="Science">
        <title>Role of mobile DNA in the evolution of vancomycin-resistant Enterococcus faecalis.</title>
        <authorList>
            <person name="Paulsen I.T."/>
            <person name="Banerjei L."/>
            <person name="Myers G.S.A."/>
            <person name="Nelson K.E."/>
            <person name="Seshadri R."/>
            <person name="Read T.D."/>
            <person name="Fouts D.E."/>
            <person name="Eisen J.A."/>
            <person name="Gill S.R."/>
            <person name="Heidelberg J.F."/>
            <person name="Tettelin H."/>
            <person name="Dodson R.J."/>
            <person name="Umayam L.A."/>
            <person name="Brinkac L.M."/>
            <person name="Beanan M.J."/>
            <person name="Daugherty S.C."/>
            <person name="DeBoy R.T."/>
            <person name="Durkin S.A."/>
            <person name="Kolonay J.F."/>
            <person name="Madupu R."/>
            <person name="Nelson W.C."/>
            <person name="Vamathevan J.J."/>
            <person name="Tran B."/>
            <person name="Upton J."/>
            <person name="Hansen T."/>
            <person name="Shetty J."/>
            <person name="Khouri H.M."/>
            <person name="Utterback T.R."/>
            <person name="Radune D."/>
            <person name="Ketchum K.A."/>
            <person name="Dougherty B.A."/>
            <person name="Fraser C.M."/>
        </authorList>
    </citation>
    <scope>NUCLEOTIDE SEQUENCE [LARGE SCALE GENOMIC DNA]</scope>
    <source>
        <strain>ATCC 700802 / V583</strain>
    </source>
</reference>
<organism>
    <name type="scientific">Enterococcus faecalis (strain ATCC 700802 / V583)</name>
    <dbReference type="NCBI Taxonomy" id="226185"/>
    <lineage>
        <taxon>Bacteria</taxon>
        <taxon>Bacillati</taxon>
        <taxon>Bacillota</taxon>
        <taxon>Bacilli</taxon>
        <taxon>Lactobacillales</taxon>
        <taxon>Enterococcaceae</taxon>
        <taxon>Enterococcus</taxon>
    </lineage>
</organism>